<reference key="1">
    <citation type="submission" date="2008-02" db="EMBL/GenBank/DDBJ databases">
        <title>Complete sequence of Yersinia pseudotuberculosis YPIII.</title>
        <authorList>
            <consortium name="US DOE Joint Genome Institute"/>
            <person name="Copeland A."/>
            <person name="Lucas S."/>
            <person name="Lapidus A."/>
            <person name="Glavina del Rio T."/>
            <person name="Dalin E."/>
            <person name="Tice H."/>
            <person name="Bruce D."/>
            <person name="Goodwin L."/>
            <person name="Pitluck S."/>
            <person name="Munk A.C."/>
            <person name="Brettin T."/>
            <person name="Detter J.C."/>
            <person name="Han C."/>
            <person name="Tapia R."/>
            <person name="Schmutz J."/>
            <person name="Larimer F."/>
            <person name="Land M."/>
            <person name="Hauser L."/>
            <person name="Challacombe J.F."/>
            <person name="Green L."/>
            <person name="Lindler L.E."/>
            <person name="Nikolich M.P."/>
            <person name="Richardson P."/>
        </authorList>
    </citation>
    <scope>NUCLEOTIDE SEQUENCE [LARGE SCALE GENOMIC DNA]</scope>
    <source>
        <strain>YPIII</strain>
    </source>
</reference>
<keyword id="KW-0274">FAD</keyword>
<keyword id="KW-0285">Flavoprotein</keyword>
<keyword id="KW-0520">NAD</keyword>
<keyword id="KW-0560">Oxidoreductase</keyword>
<gene>
    <name evidence="1" type="primary">betA</name>
    <name type="ordered locus">YPK_2917</name>
</gene>
<dbReference type="EC" id="1.1.99.1" evidence="1"/>
<dbReference type="EC" id="1.2.1.8" evidence="1"/>
<dbReference type="EMBL" id="CP000950">
    <property type="protein sequence ID" value="ACA69191.1"/>
    <property type="molecule type" value="Genomic_DNA"/>
</dbReference>
<dbReference type="RefSeq" id="WP_012105474.1">
    <property type="nucleotide sequence ID" value="NZ_CP009792.1"/>
</dbReference>
<dbReference type="SMR" id="B1JSR0"/>
<dbReference type="KEGG" id="ypy:YPK_2917"/>
<dbReference type="PATRIC" id="fig|502800.11.peg.3638"/>
<dbReference type="UniPathway" id="UPA00529">
    <property type="reaction ID" value="UER00385"/>
</dbReference>
<dbReference type="GO" id="GO:0016020">
    <property type="term" value="C:membrane"/>
    <property type="evidence" value="ECO:0007669"/>
    <property type="project" value="TreeGrafter"/>
</dbReference>
<dbReference type="GO" id="GO:0008802">
    <property type="term" value="F:betaine-aldehyde dehydrogenase (NAD+) activity"/>
    <property type="evidence" value="ECO:0007669"/>
    <property type="project" value="UniProtKB-EC"/>
</dbReference>
<dbReference type="GO" id="GO:0008812">
    <property type="term" value="F:choline dehydrogenase activity"/>
    <property type="evidence" value="ECO:0007669"/>
    <property type="project" value="UniProtKB-UniRule"/>
</dbReference>
<dbReference type="GO" id="GO:0050660">
    <property type="term" value="F:flavin adenine dinucleotide binding"/>
    <property type="evidence" value="ECO:0007669"/>
    <property type="project" value="InterPro"/>
</dbReference>
<dbReference type="GO" id="GO:0019285">
    <property type="term" value="P:glycine betaine biosynthetic process from choline"/>
    <property type="evidence" value="ECO:0007669"/>
    <property type="project" value="UniProtKB-UniRule"/>
</dbReference>
<dbReference type="Gene3D" id="3.50.50.60">
    <property type="entry name" value="FAD/NAD(P)-binding domain"/>
    <property type="match status" value="1"/>
</dbReference>
<dbReference type="Gene3D" id="3.30.560.10">
    <property type="entry name" value="Glucose Oxidase, domain 3"/>
    <property type="match status" value="1"/>
</dbReference>
<dbReference type="HAMAP" id="MF_00750">
    <property type="entry name" value="Choline_dehydrogen"/>
    <property type="match status" value="1"/>
</dbReference>
<dbReference type="InterPro" id="IPR011533">
    <property type="entry name" value="BetA"/>
</dbReference>
<dbReference type="InterPro" id="IPR036188">
    <property type="entry name" value="FAD/NAD-bd_sf"/>
</dbReference>
<dbReference type="InterPro" id="IPR012132">
    <property type="entry name" value="GMC_OxRdtase"/>
</dbReference>
<dbReference type="InterPro" id="IPR000172">
    <property type="entry name" value="GMC_OxRdtase_N"/>
</dbReference>
<dbReference type="InterPro" id="IPR007867">
    <property type="entry name" value="GMC_OxRtase_C"/>
</dbReference>
<dbReference type="NCBIfam" id="TIGR01810">
    <property type="entry name" value="betA"/>
    <property type="match status" value="1"/>
</dbReference>
<dbReference type="NCBIfam" id="NF002550">
    <property type="entry name" value="PRK02106.1"/>
    <property type="match status" value="1"/>
</dbReference>
<dbReference type="PANTHER" id="PTHR11552:SF147">
    <property type="entry name" value="CHOLINE DEHYDROGENASE, MITOCHONDRIAL"/>
    <property type="match status" value="1"/>
</dbReference>
<dbReference type="PANTHER" id="PTHR11552">
    <property type="entry name" value="GLUCOSE-METHANOL-CHOLINE GMC OXIDOREDUCTASE"/>
    <property type="match status" value="1"/>
</dbReference>
<dbReference type="Pfam" id="PF05199">
    <property type="entry name" value="GMC_oxred_C"/>
    <property type="match status" value="1"/>
</dbReference>
<dbReference type="Pfam" id="PF00732">
    <property type="entry name" value="GMC_oxred_N"/>
    <property type="match status" value="1"/>
</dbReference>
<dbReference type="PIRSF" id="PIRSF000137">
    <property type="entry name" value="Alcohol_oxidase"/>
    <property type="match status" value="1"/>
</dbReference>
<dbReference type="SUPFAM" id="SSF54373">
    <property type="entry name" value="FAD-linked reductases, C-terminal domain"/>
    <property type="match status" value="1"/>
</dbReference>
<dbReference type="SUPFAM" id="SSF51905">
    <property type="entry name" value="FAD/NAD(P)-binding domain"/>
    <property type="match status" value="1"/>
</dbReference>
<dbReference type="PROSITE" id="PS00623">
    <property type="entry name" value="GMC_OXRED_1"/>
    <property type="match status" value="1"/>
</dbReference>
<dbReference type="PROSITE" id="PS00624">
    <property type="entry name" value="GMC_OXRED_2"/>
    <property type="match status" value="1"/>
</dbReference>
<organism>
    <name type="scientific">Yersinia pseudotuberculosis serotype O:3 (strain YPIII)</name>
    <dbReference type="NCBI Taxonomy" id="502800"/>
    <lineage>
        <taxon>Bacteria</taxon>
        <taxon>Pseudomonadati</taxon>
        <taxon>Pseudomonadota</taxon>
        <taxon>Gammaproteobacteria</taxon>
        <taxon>Enterobacterales</taxon>
        <taxon>Yersiniaceae</taxon>
        <taxon>Yersinia</taxon>
    </lineage>
</organism>
<name>BETA_YERPY</name>
<proteinExistence type="inferred from homology"/>
<sequence length="567" mass="62529">MEYDYIIIGAGSAGNVLAARLTEDADVTVLLLEAGGPDYRLDFRTQMPAALAFPLQGKRYNWAYETDPEPHMNNRRMECGRGKGLGGSSLINGMCYIRGNAMDFDHWASLSGLEDWSYLDCLPYFRKAETRDIGPNDFHGGEGPVNVTTPKIGNNPLFHAMVAAGVQAGYPRTDDLNGYQQEGFGPMDRTVTPKGRRASTARGYLDQARPRNNLTIITHALTDRILFEGKRATGVRYLKGDAGTGQTAYARREVLLCGGAIASPQILQRSGIGPAELLQRLDIPLVQALPGVGENLQDHLEMYLQYSCKQPVSLYPALLWFNQPKIGIEWLFNGTGVGASNQFEAGGFIRSRDAFTWPNIQYHFLPVAINYNGSNAVKEHGFQAHVGSMRSPSRGRIQVKSKDPRQHPSILFNYMSSEQDWHEFRDAIRITREIIAQPALDPYRGREISPGANVQNDDELDAFIREHAETAYHPSCSCKMGDDKMAVVDGQGRVHGVQGLRVVDASIMPQIITGNLNATTIMIAEKIADRIRGCQPLAKSNAAYFIAGDTPARTSPVRHSLPVTSYP</sequence>
<comment type="function">
    <text evidence="1">Involved in the biosynthesis of the osmoprotectant glycine betaine. Catalyzes the oxidation of choline to betaine aldehyde and betaine aldehyde to glycine betaine at the same rate.</text>
</comment>
<comment type="catalytic activity">
    <reaction evidence="1">
        <text>choline + A = betaine aldehyde + AH2</text>
        <dbReference type="Rhea" id="RHEA:17433"/>
        <dbReference type="ChEBI" id="CHEBI:13193"/>
        <dbReference type="ChEBI" id="CHEBI:15354"/>
        <dbReference type="ChEBI" id="CHEBI:15710"/>
        <dbReference type="ChEBI" id="CHEBI:17499"/>
        <dbReference type="EC" id="1.1.99.1"/>
    </reaction>
</comment>
<comment type="catalytic activity">
    <reaction evidence="1">
        <text>betaine aldehyde + NAD(+) + H2O = glycine betaine + NADH + 2 H(+)</text>
        <dbReference type="Rhea" id="RHEA:15305"/>
        <dbReference type="ChEBI" id="CHEBI:15377"/>
        <dbReference type="ChEBI" id="CHEBI:15378"/>
        <dbReference type="ChEBI" id="CHEBI:15710"/>
        <dbReference type="ChEBI" id="CHEBI:17750"/>
        <dbReference type="ChEBI" id="CHEBI:57540"/>
        <dbReference type="ChEBI" id="CHEBI:57945"/>
        <dbReference type="EC" id="1.2.1.8"/>
    </reaction>
</comment>
<comment type="cofactor">
    <cofactor evidence="1">
        <name>FAD</name>
        <dbReference type="ChEBI" id="CHEBI:57692"/>
    </cofactor>
</comment>
<comment type="pathway">
    <text evidence="1">Amine and polyamine biosynthesis; betaine biosynthesis via choline pathway; betaine aldehyde from choline (cytochrome c reductase route): step 1/1.</text>
</comment>
<comment type="similarity">
    <text evidence="1">Belongs to the GMC oxidoreductase family.</text>
</comment>
<accession>B1JSR0</accession>
<protein>
    <recommendedName>
        <fullName evidence="1">Oxygen-dependent choline dehydrogenase</fullName>
        <shortName evidence="1">CDH</shortName>
        <shortName evidence="1">CHD</shortName>
        <ecNumber evidence="1">1.1.99.1</ecNumber>
    </recommendedName>
    <alternativeName>
        <fullName evidence="1">Betaine aldehyde dehydrogenase</fullName>
        <shortName evidence="1">BADH</shortName>
        <ecNumber evidence="1">1.2.1.8</ecNumber>
    </alternativeName>
</protein>
<feature type="chain" id="PRO_1000133342" description="Oxygen-dependent choline dehydrogenase">
    <location>
        <begin position="1"/>
        <end position="567"/>
    </location>
</feature>
<feature type="active site" description="Proton acceptor" evidence="1">
    <location>
        <position position="473"/>
    </location>
</feature>
<feature type="binding site" evidence="1">
    <location>
        <begin position="4"/>
        <end position="33"/>
    </location>
    <ligand>
        <name>FAD</name>
        <dbReference type="ChEBI" id="CHEBI:57692"/>
    </ligand>
</feature>
<evidence type="ECO:0000255" key="1">
    <source>
        <dbReference type="HAMAP-Rule" id="MF_00750"/>
    </source>
</evidence>